<gene>
    <name type="primary">KRT35</name>
    <name type="synonym">HHA5</name>
    <name type="synonym">HKA5</name>
    <name type="synonym">KRTHA5</name>
</gene>
<name>KRT35_HUMAN</name>
<accession>Q92764</accession>
<accession>O76012</accession>
<accession>Q92651</accession>
<protein>
    <recommendedName>
        <fullName>Keratin, type I cuticular Ha5</fullName>
    </recommendedName>
    <alternativeName>
        <fullName>Hair keratin, type I Ha5</fullName>
    </alternativeName>
    <alternativeName>
        <fullName>Keratin-35</fullName>
        <shortName>K35</shortName>
    </alternativeName>
</protein>
<reference key="1">
    <citation type="journal article" date="1996" name="J. Invest. Dermatol.">
        <title>Genomic characterization of the human type I cuticular hair keratin hHa2 and identification of an adjacent novel type I hair keratin gene hHa5.</title>
        <authorList>
            <person name="Rogers M.A."/>
            <person name="Winter H."/>
            <person name="Langbein L."/>
            <person name="Krieg T."/>
            <person name="Schweizer J."/>
        </authorList>
    </citation>
    <scope>NUCLEOTIDE SEQUENCE [MRNA]</scope>
    <scope>NUCLEOTIDE SEQUENCE [GENOMIC DNA] OF 334-455</scope>
    <scope>TISSUE SPECIFICITY</scope>
    <scope>VARIANTS PRO-36 AND ALA-443</scope>
    <source>
        <tissue>Hair</tissue>
        <tissue>Scalp</tissue>
    </source>
</reference>
<reference key="2">
    <citation type="journal article" date="1998" name="J. Biol. Chem.">
        <title>Characterization of a 190-kilobase pair domain of human type I hair keratin genes.</title>
        <authorList>
            <person name="Rogers M.A."/>
            <person name="Winter H."/>
            <person name="Wolf C."/>
            <person name="Heck M."/>
            <person name="Schweizer J."/>
        </authorList>
    </citation>
    <scope>NUCLEOTIDE SEQUENCE [GENOMIC DNA]</scope>
</reference>
<reference key="3">
    <citation type="journal article" date="2006" name="Nature">
        <title>DNA sequence of human chromosome 17 and analysis of rearrangement in the human lineage.</title>
        <authorList>
            <person name="Zody M.C."/>
            <person name="Garber M."/>
            <person name="Adams D.J."/>
            <person name="Sharpe T."/>
            <person name="Harrow J."/>
            <person name="Lupski J.R."/>
            <person name="Nicholson C."/>
            <person name="Searle S.M."/>
            <person name="Wilming L."/>
            <person name="Young S.K."/>
            <person name="Abouelleil A."/>
            <person name="Allen N.R."/>
            <person name="Bi W."/>
            <person name="Bloom T."/>
            <person name="Borowsky M.L."/>
            <person name="Bugalter B.E."/>
            <person name="Butler J."/>
            <person name="Chang J.L."/>
            <person name="Chen C.-K."/>
            <person name="Cook A."/>
            <person name="Corum B."/>
            <person name="Cuomo C.A."/>
            <person name="de Jong P.J."/>
            <person name="DeCaprio D."/>
            <person name="Dewar K."/>
            <person name="FitzGerald M."/>
            <person name="Gilbert J."/>
            <person name="Gibson R."/>
            <person name="Gnerre S."/>
            <person name="Goldstein S."/>
            <person name="Grafham D.V."/>
            <person name="Grocock R."/>
            <person name="Hafez N."/>
            <person name="Hagopian D.S."/>
            <person name="Hart E."/>
            <person name="Norman C.H."/>
            <person name="Humphray S."/>
            <person name="Jaffe D.B."/>
            <person name="Jones M."/>
            <person name="Kamal M."/>
            <person name="Khodiyar V.K."/>
            <person name="LaButti K."/>
            <person name="Laird G."/>
            <person name="Lehoczky J."/>
            <person name="Liu X."/>
            <person name="Lokyitsang T."/>
            <person name="Loveland J."/>
            <person name="Lui A."/>
            <person name="Macdonald P."/>
            <person name="Major J.E."/>
            <person name="Matthews L."/>
            <person name="Mauceli E."/>
            <person name="McCarroll S.A."/>
            <person name="Mihalev A.H."/>
            <person name="Mudge J."/>
            <person name="Nguyen C."/>
            <person name="Nicol R."/>
            <person name="O'Leary S.B."/>
            <person name="Osoegawa K."/>
            <person name="Schwartz D.C."/>
            <person name="Shaw-Smith C."/>
            <person name="Stankiewicz P."/>
            <person name="Steward C."/>
            <person name="Swarbreck D."/>
            <person name="Venkataraman V."/>
            <person name="Whittaker C.A."/>
            <person name="Yang X."/>
            <person name="Zimmer A.R."/>
            <person name="Bradley A."/>
            <person name="Hubbard T."/>
            <person name="Birren B.W."/>
            <person name="Rogers J."/>
            <person name="Lander E.S."/>
            <person name="Nusbaum C."/>
        </authorList>
    </citation>
    <scope>NUCLEOTIDE SEQUENCE [LARGE SCALE GENOMIC DNA]</scope>
</reference>
<feature type="chain" id="PRO_0000063692" description="Keratin, type I cuticular Ha5">
    <location>
        <begin position="1"/>
        <end position="455"/>
    </location>
</feature>
<feature type="domain" description="IF rod" evidence="1">
    <location>
        <begin position="97"/>
        <end position="408"/>
    </location>
</feature>
<feature type="region of interest" description="Head">
    <location>
        <begin position="1"/>
        <end position="97"/>
    </location>
</feature>
<feature type="region of interest" description="Coil 1A">
    <location>
        <begin position="98"/>
        <end position="132"/>
    </location>
</feature>
<feature type="region of interest" description="Linker 1">
    <location>
        <begin position="133"/>
        <end position="143"/>
    </location>
</feature>
<feature type="region of interest" description="Coil 1B">
    <location>
        <begin position="144"/>
        <end position="244"/>
    </location>
</feature>
<feature type="region of interest" description="Linker 12">
    <location>
        <begin position="245"/>
        <end position="260"/>
    </location>
</feature>
<feature type="region of interest" description="Coil 2">
    <location>
        <begin position="261"/>
        <end position="404"/>
    </location>
</feature>
<feature type="region of interest" description="Tail">
    <location>
        <begin position="405"/>
        <end position="455"/>
    </location>
</feature>
<feature type="site" description="Stutter">
    <location>
        <position position="346"/>
    </location>
</feature>
<feature type="sequence variant" id="VAR_056019" description="In dbSNP:rs743686." evidence="2">
    <original>S</original>
    <variation>P</variation>
    <location>
        <position position="36"/>
    </location>
</feature>
<feature type="sequence variant" id="VAR_056020" description="In dbSNP:rs12451652.">
    <original>C</original>
    <variation>Y</variation>
    <location>
        <position position="441"/>
    </location>
</feature>
<feature type="sequence variant" id="VAR_056021" description="In dbSNP:rs2071601." evidence="2">
    <original>P</original>
    <variation>A</variation>
    <location>
        <position position="443"/>
    </location>
</feature>
<feature type="sequence conflict" description="In Ref. 1; CAA62286 and 2; CAA76387." evidence="3" ref="1 2">
    <original>QL</original>
    <variation>HV</variation>
    <location>
        <begin position="117"/>
        <end position="118"/>
    </location>
</feature>
<keyword id="KW-0175">Coiled coil</keyword>
<keyword id="KW-0403">Intermediate filament</keyword>
<keyword id="KW-0416">Keratin</keyword>
<keyword id="KW-1267">Proteomics identification</keyword>
<keyword id="KW-1185">Reference proteome</keyword>
<organism>
    <name type="scientific">Homo sapiens</name>
    <name type="common">Human</name>
    <dbReference type="NCBI Taxonomy" id="9606"/>
    <lineage>
        <taxon>Eukaryota</taxon>
        <taxon>Metazoa</taxon>
        <taxon>Chordata</taxon>
        <taxon>Craniata</taxon>
        <taxon>Vertebrata</taxon>
        <taxon>Euteleostomi</taxon>
        <taxon>Mammalia</taxon>
        <taxon>Eutheria</taxon>
        <taxon>Euarchontoglires</taxon>
        <taxon>Primates</taxon>
        <taxon>Haplorrhini</taxon>
        <taxon>Catarrhini</taxon>
        <taxon>Hominidae</taxon>
        <taxon>Homo</taxon>
    </lineage>
</organism>
<proteinExistence type="evidence at protein level"/>
<evidence type="ECO:0000255" key="1">
    <source>
        <dbReference type="PROSITE-ProRule" id="PRU01188"/>
    </source>
</evidence>
<evidence type="ECO:0000269" key="2">
    <source>
    </source>
</evidence>
<evidence type="ECO:0000305" key="3"/>
<dbReference type="EMBL" id="X90762">
    <property type="protein sequence ID" value="CAA62285.1"/>
    <property type="molecule type" value="Genomic_DNA"/>
</dbReference>
<dbReference type="EMBL" id="X90763">
    <property type="protein sequence ID" value="CAA62286.1"/>
    <property type="status" value="ALT_INIT"/>
    <property type="molecule type" value="mRNA"/>
</dbReference>
<dbReference type="EMBL" id="Y16791">
    <property type="protein sequence ID" value="CAA76387.1"/>
    <property type="status" value="ALT_INIT"/>
    <property type="molecule type" value="Genomic_DNA"/>
</dbReference>
<dbReference type="EMBL" id="AC019349">
    <property type="status" value="NOT_ANNOTATED_CDS"/>
    <property type="molecule type" value="Genomic_DNA"/>
</dbReference>
<dbReference type="CCDS" id="CCDS11394.2"/>
<dbReference type="RefSeq" id="NP_002271.3">
    <property type="nucleotide sequence ID" value="NM_002280.4"/>
</dbReference>
<dbReference type="RefSeq" id="XP_011523096.1">
    <property type="nucleotide sequence ID" value="XM_011524794.1"/>
</dbReference>
<dbReference type="SMR" id="Q92764"/>
<dbReference type="BioGRID" id="110084">
    <property type="interactions" value="196"/>
</dbReference>
<dbReference type="FunCoup" id="Q92764">
    <property type="interactions" value="249"/>
</dbReference>
<dbReference type="IntAct" id="Q92764">
    <property type="interactions" value="97"/>
</dbReference>
<dbReference type="STRING" id="9606.ENSP00000377558"/>
<dbReference type="iPTMnet" id="Q92764"/>
<dbReference type="MetOSite" id="Q92764"/>
<dbReference type="PhosphoSitePlus" id="Q92764"/>
<dbReference type="SwissPalm" id="Q92764"/>
<dbReference type="BioMuta" id="KRT35"/>
<dbReference type="DMDM" id="296439499"/>
<dbReference type="jPOST" id="Q92764"/>
<dbReference type="MassIVE" id="Q92764"/>
<dbReference type="PaxDb" id="9606-ENSP00000377558"/>
<dbReference type="PeptideAtlas" id="Q92764"/>
<dbReference type="ProteomicsDB" id="75448"/>
<dbReference type="Antibodypedia" id="28853">
    <property type="antibodies" value="149 antibodies from 20 providers"/>
</dbReference>
<dbReference type="DNASU" id="3886"/>
<dbReference type="Ensembl" id="ENST00000246639.7">
    <property type="protein sequence ID" value="ENSP00000246639.3"/>
    <property type="gene ID" value="ENSG00000197079.9"/>
</dbReference>
<dbReference type="GeneID" id="3886"/>
<dbReference type="KEGG" id="hsa:3886"/>
<dbReference type="MANE-Select" id="ENST00000246639.7">
    <property type="protein sequence ID" value="ENSP00000246639.3"/>
    <property type="RefSeq nucleotide sequence ID" value="NM_002280.6"/>
    <property type="RefSeq protein sequence ID" value="NP_002271.3"/>
</dbReference>
<dbReference type="UCSC" id="uc002hws.4">
    <property type="organism name" value="human"/>
</dbReference>
<dbReference type="AGR" id="HGNC:6453"/>
<dbReference type="CTD" id="3886"/>
<dbReference type="DisGeNET" id="3886"/>
<dbReference type="GeneCards" id="KRT35"/>
<dbReference type="HGNC" id="HGNC:6453">
    <property type="gene designation" value="KRT35"/>
</dbReference>
<dbReference type="HPA" id="ENSG00000197079">
    <property type="expression patterns" value="Tissue enriched (skin)"/>
</dbReference>
<dbReference type="MIM" id="602764">
    <property type="type" value="gene"/>
</dbReference>
<dbReference type="neXtProt" id="NX_Q92764"/>
<dbReference type="OpenTargets" id="ENSG00000197079"/>
<dbReference type="PharmGKB" id="PA30242"/>
<dbReference type="VEuPathDB" id="HostDB:ENSG00000197079"/>
<dbReference type="eggNOG" id="ENOG502QQY9">
    <property type="taxonomic scope" value="Eukaryota"/>
</dbReference>
<dbReference type="GeneTree" id="ENSGT00940000161787"/>
<dbReference type="InParanoid" id="Q92764"/>
<dbReference type="OMA" id="SYRVASC"/>
<dbReference type="OrthoDB" id="2441647at2759"/>
<dbReference type="PAN-GO" id="Q92764">
    <property type="GO annotations" value="3 GO annotations based on evolutionary models"/>
</dbReference>
<dbReference type="PhylomeDB" id="Q92764"/>
<dbReference type="TreeFam" id="TF332742"/>
<dbReference type="PathwayCommons" id="Q92764"/>
<dbReference type="Reactome" id="R-HSA-6805567">
    <property type="pathway name" value="Keratinization"/>
</dbReference>
<dbReference type="Reactome" id="R-HSA-6809371">
    <property type="pathway name" value="Formation of the cornified envelope"/>
</dbReference>
<dbReference type="SignaLink" id="Q92764"/>
<dbReference type="BioGRID-ORCS" id="3886">
    <property type="hits" value="13 hits in 1109 CRISPR screens"/>
</dbReference>
<dbReference type="GenomeRNAi" id="3886"/>
<dbReference type="Pharos" id="Q92764">
    <property type="development level" value="Tbio"/>
</dbReference>
<dbReference type="PRO" id="PR:Q92764"/>
<dbReference type="Proteomes" id="UP000005640">
    <property type="component" value="Chromosome 17"/>
</dbReference>
<dbReference type="RNAct" id="Q92764">
    <property type="molecule type" value="protein"/>
</dbReference>
<dbReference type="Bgee" id="ENSG00000197079">
    <property type="expression patterns" value="Expressed in upper arm skin and 55 other cell types or tissues"/>
</dbReference>
<dbReference type="ExpressionAtlas" id="Q92764">
    <property type="expression patterns" value="baseline and differential"/>
</dbReference>
<dbReference type="GO" id="GO:0005856">
    <property type="term" value="C:cytoskeleton"/>
    <property type="evidence" value="ECO:0000318"/>
    <property type="project" value="GO_Central"/>
</dbReference>
<dbReference type="GO" id="GO:0005829">
    <property type="term" value="C:cytosol"/>
    <property type="evidence" value="ECO:0000304"/>
    <property type="project" value="Reactome"/>
</dbReference>
<dbReference type="GO" id="GO:0070062">
    <property type="term" value="C:extracellular exosome"/>
    <property type="evidence" value="ECO:0007005"/>
    <property type="project" value="UniProtKB"/>
</dbReference>
<dbReference type="GO" id="GO:0005615">
    <property type="term" value="C:extracellular space"/>
    <property type="evidence" value="ECO:0007005"/>
    <property type="project" value="UniProtKB"/>
</dbReference>
<dbReference type="GO" id="GO:0005882">
    <property type="term" value="C:intermediate filament"/>
    <property type="evidence" value="ECO:0007669"/>
    <property type="project" value="UniProtKB-KW"/>
</dbReference>
<dbReference type="GO" id="GO:0005198">
    <property type="term" value="F:structural molecule activity"/>
    <property type="evidence" value="ECO:0007669"/>
    <property type="project" value="InterPro"/>
</dbReference>
<dbReference type="GO" id="GO:0009653">
    <property type="term" value="P:anatomical structure morphogenesis"/>
    <property type="evidence" value="ECO:0000304"/>
    <property type="project" value="ProtInc"/>
</dbReference>
<dbReference type="GO" id="GO:0030855">
    <property type="term" value="P:epithelial cell differentiation"/>
    <property type="evidence" value="ECO:0000318"/>
    <property type="project" value="GO_Central"/>
</dbReference>
<dbReference type="GO" id="GO:0045109">
    <property type="term" value="P:intermediate filament organization"/>
    <property type="evidence" value="ECO:0000318"/>
    <property type="project" value="GO_Central"/>
</dbReference>
<dbReference type="FunFam" id="1.20.5.1160:FF:000002">
    <property type="entry name" value="Type I keratin 10"/>
    <property type="match status" value="1"/>
</dbReference>
<dbReference type="FunFam" id="1.20.5.170:FF:000002">
    <property type="entry name" value="Type I keratin KA11"/>
    <property type="match status" value="1"/>
</dbReference>
<dbReference type="FunFam" id="1.20.5.500:FF:000001">
    <property type="entry name" value="Type II keratin 23"/>
    <property type="match status" value="1"/>
</dbReference>
<dbReference type="Gene3D" id="1.20.5.170">
    <property type="match status" value="1"/>
</dbReference>
<dbReference type="Gene3D" id="1.20.5.500">
    <property type="entry name" value="Single helix bin"/>
    <property type="match status" value="1"/>
</dbReference>
<dbReference type="Gene3D" id="1.20.5.1160">
    <property type="entry name" value="Vasodilator-stimulated phosphoprotein"/>
    <property type="match status" value="1"/>
</dbReference>
<dbReference type="InterPro" id="IPR018039">
    <property type="entry name" value="IF_conserved"/>
</dbReference>
<dbReference type="InterPro" id="IPR039008">
    <property type="entry name" value="IF_rod_dom"/>
</dbReference>
<dbReference type="InterPro" id="IPR002957">
    <property type="entry name" value="Keratin_I"/>
</dbReference>
<dbReference type="PANTHER" id="PTHR23239">
    <property type="entry name" value="INTERMEDIATE FILAMENT"/>
    <property type="match status" value="1"/>
</dbReference>
<dbReference type="PANTHER" id="PTHR23239:SF193">
    <property type="entry name" value="KERATIN, TYPE I CUTICULAR HA5"/>
    <property type="match status" value="1"/>
</dbReference>
<dbReference type="Pfam" id="PF00038">
    <property type="entry name" value="Filament"/>
    <property type="match status" value="1"/>
</dbReference>
<dbReference type="PRINTS" id="PR01248">
    <property type="entry name" value="TYPE1KERATIN"/>
</dbReference>
<dbReference type="SMART" id="SM01391">
    <property type="entry name" value="Filament"/>
    <property type="match status" value="1"/>
</dbReference>
<dbReference type="SUPFAM" id="SSF64593">
    <property type="entry name" value="Intermediate filament protein, coiled coil region"/>
    <property type="match status" value="2"/>
</dbReference>
<dbReference type="SUPFAM" id="SSF46579">
    <property type="entry name" value="Prefoldin"/>
    <property type="match status" value="1"/>
</dbReference>
<dbReference type="PROSITE" id="PS00226">
    <property type="entry name" value="IF_ROD_1"/>
    <property type="match status" value="1"/>
</dbReference>
<dbReference type="PROSITE" id="PS51842">
    <property type="entry name" value="IF_ROD_2"/>
    <property type="match status" value="1"/>
</dbReference>
<sequence>MASKCLKAGFSSGSLKSPGGASGGSTRVSAMYSSSSCKLPSLSPVARSFSACSVGLGRSSYRATSCLPALCLPAGGFATSYSGGGGWFGEGILTGNEKETMQSLNDRLAGYLEKVRQLEQENASLESRIREWCEQQVPYMCPDYQSYFRTIEELQKKTLCSKAENARLVVEIDNAKLAADDFRTKYETEVSLRQLVESDINGLRRILDDLTLCKSDLEAQVESLKEELLCLKKNHEEEVNSLRCQLGDRLNVEVDAAPPVDLNRVLEEMRCQYETLVENNRRDAEDWLDTQSEELNQQVVSSSEQLQSCQAEIIELRRTVNALEIELQAQHSMRDALESTLAETEARYSSQLAQMQCMITNVEAQLAEIRADLERQNQEYQVLLDVRARLECEINTYRGLLESEDSKLPCNPCAPDYSPSKSCLPCLPAASCGPSAARTNCSPRPICVPCPGGRF</sequence>
<comment type="interaction">
    <interactant intactId="EBI-1058674">
        <id>Q92764</id>
    </interactant>
    <interactant intactId="EBI-742038">
        <id>Q9P2A4</id>
        <label>ABI3</label>
    </interactant>
    <organismsDiffer>false</organismsDiffer>
    <experiments>3</experiments>
</comment>
<comment type="interaction">
    <interactant intactId="EBI-1058674">
        <id>Q92764</id>
    </interactant>
    <interactant intactId="EBI-8643161">
        <id>Q9NX04</id>
        <label>AIRIM</label>
    </interactant>
    <organismsDiffer>false</organismsDiffer>
    <experiments>3</experiments>
</comment>
<comment type="interaction">
    <interactant intactId="EBI-1058674">
        <id>Q92764</id>
    </interactant>
    <interactant intactId="EBI-12006308">
        <id>Q7Z3C6-3</id>
        <label>ATG9A</label>
    </interactant>
    <organismsDiffer>false</organismsDiffer>
    <experiments>3</experiments>
</comment>
<comment type="interaction">
    <interactant intactId="EBI-1058674">
        <id>Q92764</id>
    </interactant>
    <interactant intactId="EBI-1050106">
        <id>O75934</id>
        <label>BCAS2</label>
    </interactant>
    <organismsDiffer>false</organismsDiffer>
    <experiments>3</experiments>
</comment>
<comment type="interaction">
    <interactant intactId="EBI-1058674">
        <id>Q92764</id>
    </interactant>
    <interactant intactId="EBI-10226774">
        <id>Q0VAL7</id>
        <label>C21orf58</label>
    </interactant>
    <organismsDiffer>false</organismsDiffer>
    <experiments>3</experiments>
</comment>
<comment type="interaction">
    <interactant intactId="EBI-1058674">
        <id>Q92764</id>
    </interactant>
    <interactant intactId="EBI-744556">
        <id>Q96HB5</id>
        <label>CCDC120</label>
    </interactant>
    <organismsDiffer>false</organismsDiffer>
    <experiments>3</experiments>
</comment>
<comment type="interaction">
    <interactant intactId="EBI-1058674">
        <id>Q92764</id>
    </interactant>
    <interactant intactId="EBI-740814">
        <id>Q8N715</id>
        <label>CCDC185</label>
    </interactant>
    <organismsDiffer>false</organismsDiffer>
    <experiments>3</experiments>
</comment>
<comment type="interaction">
    <interactant intactId="EBI-1058674">
        <id>Q92764</id>
    </interactant>
    <interactant intactId="EBI-10181422">
        <id>A0A1B0GWI1</id>
        <label>CCDC196</label>
    </interactant>
    <organismsDiffer>false</organismsDiffer>
    <experiments>3</experiments>
</comment>
<comment type="interaction">
    <interactant intactId="EBI-1058674">
        <id>Q92764</id>
    </interactant>
    <interactant intactId="EBI-10175300">
        <id>Q8TD31-3</id>
        <label>CCHCR1</label>
    </interactant>
    <organismsDiffer>false</organismsDiffer>
    <experiments>3</experiments>
</comment>
<comment type="interaction">
    <interactant intactId="EBI-1058674">
        <id>Q92764</id>
    </interactant>
    <interactant intactId="EBI-3906571">
        <id>P20138</id>
        <label>CD33</label>
    </interactant>
    <organismsDiffer>false</organismsDiffer>
    <experiments>3</experiments>
</comment>
<comment type="interaction">
    <interactant intactId="EBI-1058674">
        <id>Q92764</id>
    </interactant>
    <interactant intactId="EBI-8636823">
        <id>Q9UBR2</id>
        <label>CTSZ</label>
    </interactant>
    <organismsDiffer>false</organismsDiffer>
    <experiments>3</experiments>
</comment>
<comment type="interaction">
    <interactant intactId="EBI-1058674">
        <id>Q92764</id>
    </interactant>
    <interactant intactId="EBI-9679045">
        <id>Q9NQL9</id>
        <label>DMRT3</label>
    </interactant>
    <organismsDiffer>false</organismsDiffer>
    <experiments>3</experiments>
</comment>
<comment type="interaction">
    <interactant intactId="EBI-1058674">
        <id>Q92764</id>
    </interactant>
    <interactant intactId="EBI-11984733">
        <id>O60941-5</id>
        <label>DTNB</label>
    </interactant>
    <organismsDiffer>false</organismsDiffer>
    <experiments>3</experiments>
</comment>
<comment type="interaction">
    <interactant intactId="EBI-1058674">
        <id>Q92764</id>
    </interactant>
    <interactant intactId="EBI-11958551">
        <id>Q8N7B9-2</id>
        <label>EFCAB3</label>
    </interactant>
    <organismsDiffer>false</organismsDiffer>
    <experiments>3</experiments>
</comment>
<comment type="interaction">
    <interactant intactId="EBI-1058674">
        <id>Q92764</id>
    </interactant>
    <interactant intactId="EBI-744099">
        <id>Q9H0I2</id>
        <label>ENKD1</label>
    </interactant>
    <organismsDiffer>false</organismsDiffer>
    <experiments>3</experiments>
</comment>
<comment type="interaction">
    <interactant intactId="EBI-1058674">
        <id>Q92764</id>
    </interactant>
    <interactant intactId="EBI-371876">
        <id>Q9NQT4</id>
        <label>EXOSC5</label>
    </interactant>
    <organismsDiffer>false</organismsDiffer>
    <experiments>3</experiments>
</comment>
<comment type="interaction">
    <interactant intactId="EBI-1058674">
        <id>Q92764</id>
    </interactant>
    <interactant intactId="EBI-12006844">
        <id>A6H8Z2</id>
        <label>FAM221B</label>
    </interactant>
    <organismsDiffer>false</organismsDiffer>
    <experiments>3</experiments>
</comment>
<comment type="interaction">
    <interactant intactId="EBI-1058674">
        <id>Q92764</id>
    </interactant>
    <interactant intactId="EBI-725515">
        <id>O43559</id>
        <label>FRS3</label>
    </interactant>
    <organismsDiffer>false</organismsDiffer>
    <experiments>3</experiments>
</comment>
<comment type="interaction">
    <interactant intactId="EBI-1058674">
        <id>Q92764</id>
    </interactant>
    <interactant intactId="EBI-11956675">
        <id>Q9GZV7</id>
        <label>HAPLN2</label>
    </interactant>
    <organismsDiffer>false</organismsDiffer>
    <experiments>3</experiments>
</comment>
<comment type="interaction">
    <interactant intactId="EBI-1058674">
        <id>Q92764</id>
    </interactant>
    <interactant intactId="EBI-9834454">
        <id>P08631-2</id>
        <label>HCK</label>
    </interactant>
    <organismsDiffer>false</organismsDiffer>
    <experiments>3</experiments>
</comment>
<comment type="interaction">
    <interactant intactId="EBI-1058674">
        <id>Q92764</id>
    </interactant>
    <interactant intactId="EBI-11953488">
        <id>P56524-2</id>
        <label>HDAC4</label>
    </interactant>
    <organismsDiffer>false</organismsDiffer>
    <experiments>3</experiments>
</comment>
<comment type="interaction">
    <interactant intactId="EBI-1058674">
        <id>Q92764</id>
    </interactant>
    <interactant intactId="EBI-740220">
        <id>O14964</id>
        <label>HGS</label>
    </interactant>
    <organismsDiffer>false</organismsDiffer>
    <experiments>3</experiments>
</comment>
<comment type="interaction">
    <interactant intactId="EBI-1058674">
        <id>Q92764</id>
    </interactant>
    <interactant intactId="EBI-740785">
        <id>P49639</id>
        <label>HOXA1</label>
    </interactant>
    <organismsDiffer>false</organismsDiffer>
    <experiments>3</experiments>
</comment>
<comment type="interaction">
    <interactant intactId="EBI-1058674">
        <id>Q92764</id>
    </interactant>
    <interactant intactId="EBI-1752118">
        <id>P31273</id>
        <label>HOXC8</label>
    </interactant>
    <organismsDiffer>false</organismsDiffer>
    <experiments>3</experiments>
</comment>
<comment type="interaction">
    <interactant intactId="EBI-1058674">
        <id>Q92764</id>
    </interactant>
    <interactant intactId="EBI-4397613">
        <id>Q7L273</id>
        <label>KCTD9</label>
    </interactant>
    <organismsDiffer>false</organismsDiffer>
    <experiments>3</experiments>
</comment>
<comment type="interaction">
    <interactant intactId="EBI-1058674">
        <id>Q92764</id>
    </interactant>
    <interactant intactId="EBI-710124">
        <id>O60341</id>
        <label>KDM1A</label>
    </interactant>
    <organismsDiffer>false</organismsDiffer>
    <experiments>3</experiments>
</comment>
<comment type="interaction">
    <interactant intactId="EBI-1058674">
        <id>Q92764</id>
    </interactant>
    <interactant intactId="EBI-14069005">
        <id>Q9BVG8-5</id>
        <label>KIFC3</label>
    </interactant>
    <organismsDiffer>false</organismsDiffer>
    <experiments>3</experiments>
</comment>
<comment type="interaction">
    <interactant intactId="EBI-1058674">
        <id>Q92764</id>
    </interactant>
    <interactant intactId="EBI-6426443">
        <id>Q2WGJ6</id>
        <label>KLHL38</label>
    </interactant>
    <organismsDiffer>false</organismsDiffer>
    <experiments>3</experiments>
</comment>
<comment type="interaction">
    <interactant intactId="EBI-1058674">
        <id>Q92764</id>
    </interactant>
    <interactant intactId="EBI-298429">
        <id>P04264</id>
        <label>KRT1</label>
    </interactant>
    <organismsDiffer>false</organismsDiffer>
    <experiments>3</experiments>
</comment>
<comment type="interaction">
    <interactant intactId="EBI-1058674">
        <id>Q92764</id>
    </interactant>
    <interactant intactId="EBI-1247312">
        <id>P35908</id>
        <label>KRT2</label>
    </interactant>
    <organismsDiffer>false</organismsDiffer>
    <experiments>3</experiments>
</comment>
<comment type="interaction">
    <interactant intactId="EBI-1058674">
        <id>Q92764</id>
    </interactant>
    <interactant intactId="EBI-2430095">
        <id>P12035</id>
        <label>KRT3</label>
    </interactant>
    <organismsDiffer>false</organismsDiffer>
    <experiments>3</experiments>
</comment>
<comment type="interaction">
    <interactant intactId="EBI-1058674">
        <id>Q92764</id>
    </interactant>
    <interactant intactId="EBI-2371606">
        <id>P19013</id>
        <label>KRT4</label>
    </interactant>
    <organismsDiffer>false</organismsDiffer>
    <experiments>3</experiments>
</comment>
<comment type="interaction">
    <interactant intactId="EBI-1058674">
        <id>Q92764</id>
    </interactant>
    <interactant intactId="EBI-702187">
        <id>P13647</id>
        <label>KRT5</label>
    </interactant>
    <organismsDiffer>false</organismsDiffer>
    <experiments>3</experiments>
</comment>
<comment type="interaction">
    <interactant intactId="EBI-1058674">
        <id>Q92764</id>
    </interactant>
    <interactant intactId="EBI-702198">
        <id>P02538</id>
        <label>KRT6A</label>
    </interactant>
    <organismsDiffer>false</organismsDiffer>
    <experiments>3</experiments>
</comment>
<comment type="interaction">
    <interactant intactId="EBI-1058674">
        <id>Q92764</id>
    </interactant>
    <interactant intactId="EBI-740907">
        <id>P04259</id>
        <label>KRT6B</label>
    </interactant>
    <organismsDiffer>false</organismsDiffer>
    <experiments>3</experiments>
</comment>
<comment type="interaction">
    <interactant intactId="EBI-1058674">
        <id>Q92764</id>
    </interactant>
    <interactant intactId="EBI-2564105">
        <id>P48668</id>
        <label>KRT6C</label>
    </interactant>
    <organismsDiffer>false</organismsDiffer>
    <experiments>3</experiments>
</comment>
<comment type="interaction">
    <interactant intactId="EBI-1058674">
        <id>Q92764</id>
    </interactant>
    <interactant intactId="EBI-2952676">
        <id>Q3SY84</id>
        <label>KRT71</label>
    </interactant>
    <organismsDiffer>false</organismsDiffer>
    <experiments>3</experiments>
</comment>
<comment type="interaction">
    <interactant intactId="EBI-1058674">
        <id>Q92764</id>
    </interactant>
    <interactant intactId="EBI-1221280">
        <id>Q14CN4</id>
        <label>KRT72</label>
    </interactant>
    <organismsDiffer>false</organismsDiffer>
    <experiments>3</experiments>
</comment>
<comment type="interaction">
    <interactant intactId="EBI-1058674">
        <id>Q92764</id>
    </interactant>
    <interactant intactId="EBI-968660">
        <id>Q7RTS7</id>
        <label>KRT74</label>
    </interactant>
    <organismsDiffer>false</organismsDiffer>
    <experiments>3</experiments>
</comment>
<comment type="interaction">
    <interactant intactId="EBI-1058674">
        <id>Q92764</id>
    </interactant>
    <interactant intactId="EBI-2949715">
        <id>O95678</id>
        <label>KRT75</label>
    </interactant>
    <organismsDiffer>false</organismsDiffer>
    <experiments>3</experiments>
</comment>
<comment type="interaction">
    <interactant intactId="EBI-1058674">
        <id>Q92764</id>
    </interactant>
    <interactant intactId="EBI-3045529">
        <id>Q7Z794</id>
        <label>KRT77</label>
    </interactant>
    <organismsDiffer>false</organismsDiffer>
    <experiments>3</experiments>
</comment>
<comment type="interaction">
    <interactant intactId="EBI-1058674">
        <id>Q92764</id>
    </interactant>
    <interactant intactId="EBI-1056564">
        <id>Q8N1N4</id>
        <label>KRT78</label>
    </interactant>
    <organismsDiffer>false</organismsDiffer>
    <experiments>5</experiments>
</comment>
<comment type="interaction">
    <interactant intactId="EBI-1058674">
        <id>Q92764</id>
    </interactant>
    <interactant intactId="EBI-2514135">
        <id>Q5XKE5</id>
        <label>KRT79</label>
    </interactant>
    <organismsDiffer>false</organismsDiffer>
    <experiments>3</experiments>
</comment>
<comment type="interaction">
    <interactant intactId="EBI-1058674">
        <id>Q92764</id>
    </interactant>
    <interactant intactId="EBI-297852">
        <id>P05787</id>
        <label>KRT8</label>
    </interactant>
    <organismsDiffer>false</organismsDiffer>
    <experiments>3</experiments>
</comment>
<comment type="interaction">
    <interactant intactId="EBI-1058674">
        <id>Q92764</id>
    </interactant>
    <interactant intactId="EBI-11999246">
        <id>Q6KB66-2</id>
        <label>KRT80</label>
    </interactant>
    <organismsDiffer>false</organismsDiffer>
    <experiments>3</experiments>
</comment>
<comment type="interaction">
    <interactant intactId="EBI-1058674">
        <id>Q92764</id>
    </interactant>
    <interactant intactId="EBI-739648">
        <id>Q14533</id>
        <label>KRT81</label>
    </interactant>
    <organismsDiffer>false</organismsDiffer>
    <experiments>3</experiments>
</comment>
<comment type="interaction">
    <interactant intactId="EBI-1058674">
        <id>Q92764</id>
    </interactant>
    <interactant intactId="EBI-1045341">
        <id>Q9NSB4</id>
        <label>KRT82</label>
    </interactant>
    <organismsDiffer>false</organismsDiffer>
    <experiments>3</experiments>
</comment>
<comment type="interaction">
    <interactant intactId="EBI-1058674">
        <id>Q92764</id>
    </interactant>
    <interactant intactId="EBI-10221390">
        <id>P78385</id>
        <label>KRT83</label>
    </interactant>
    <organismsDiffer>false</organismsDiffer>
    <experiments>3</experiments>
</comment>
<comment type="interaction">
    <interactant intactId="EBI-1058674">
        <id>Q92764</id>
    </interactant>
    <interactant intactId="EBI-1049371">
        <id>P78386</id>
        <label>KRT85</label>
    </interactant>
    <organismsDiffer>false</organismsDiffer>
    <experiments>3</experiments>
</comment>
<comment type="interaction">
    <interactant intactId="EBI-1058674">
        <id>Q92764</id>
    </interactant>
    <interactant intactId="EBI-9996498">
        <id>O43790</id>
        <label>KRT86</label>
    </interactant>
    <organismsDiffer>false</organismsDiffer>
    <experiments>3</experiments>
</comment>
<comment type="interaction">
    <interactant intactId="EBI-1058674">
        <id>Q92764</id>
    </interactant>
    <interactant intactId="EBI-726510">
        <id>Q96BZ8</id>
        <label>LENG1</label>
    </interactant>
    <organismsDiffer>false</organismsDiffer>
    <experiments>3</experiments>
</comment>
<comment type="interaction">
    <interactant intactId="EBI-1058674">
        <id>Q92764</id>
    </interactant>
    <interactant intactId="EBI-10274069">
        <id>Q8TCE9</id>
        <label>LGALS14</label>
    </interactant>
    <organismsDiffer>false</organismsDiffer>
    <experiments>3</experiments>
</comment>
<comment type="interaction">
    <interactant intactId="EBI-1058674">
        <id>Q92764</id>
    </interactant>
    <interactant intactId="EBI-2341787">
        <id>Q17RB8</id>
        <label>LONRF1</label>
    </interactant>
    <organismsDiffer>false</organismsDiffer>
    <experiments>3</experiments>
</comment>
<comment type="interaction">
    <interactant intactId="EBI-1058674">
        <id>Q92764</id>
    </interactant>
    <interactant intactId="EBI-947402">
        <id>O60336</id>
        <label>MAPKBP1</label>
    </interactant>
    <organismsDiffer>false</organismsDiffer>
    <experiments>3</experiments>
</comment>
<comment type="interaction">
    <interactant intactId="EBI-1058674">
        <id>Q92764</id>
    </interactant>
    <interactant intactId="EBI-348259">
        <id>Q96EZ8</id>
        <label>MCRS1</label>
    </interactant>
    <organismsDiffer>false</organismsDiffer>
    <experiments>3</experiments>
</comment>
<comment type="interaction">
    <interactant intactId="EBI-1058674">
        <id>Q92764</id>
    </interactant>
    <interactant intactId="EBI-7950783">
        <id>Q96JP2</id>
        <label>MYO15B</label>
    </interactant>
    <organismsDiffer>false</organismsDiffer>
    <experiments>3</experiments>
</comment>
<comment type="interaction">
    <interactant intactId="EBI-1058674">
        <id>Q92764</id>
    </interactant>
    <interactant intactId="EBI-536879">
        <id>O43482</id>
        <label>OIP5</label>
    </interactant>
    <organismsDiffer>false</organismsDiffer>
    <experiments>3</experiments>
</comment>
<comment type="interaction">
    <interactant intactId="EBI-1058674">
        <id>Q92764</id>
    </interactant>
    <interactant intactId="EBI-740446">
        <id>P32242</id>
        <label>OTX1</label>
    </interactant>
    <organismsDiffer>false</organismsDiffer>
    <experiments>3</experiments>
</comment>
<comment type="interaction">
    <interactant intactId="EBI-1058674">
        <id>Q92764</id>
    </interactant>
    <interactant intactId="EBI-602382">
        <id>Q16512</id>
        <label>PKN1</label>
    </interactant>
    <organismsDiffer>false</organismsDiffer>
    <experiments>3</experiments>
</comment>
<comment type="interaction">
    <interactant intactId="EBI-1058674">
        <id>Q92764</id>
    </interactant>
    <interactant intactId="EBI-17236143">
        <id>Q12837</id>
        <label>POU4F2</label>
    </interactant>
    <organismsDiffer>false</organismsDiffer>
    <experiments>3</experiments>
</comment>
<comment type="interaction">
    <interactant intactId="EBI-1058674">
        <id>Q92764</id>
    </interactant>
    <interactant intactId="EBI-2798416">
        <id>Q99633</id>
        <label>PRPF18</label>
    </interactant>
    <organismsDiffer>false</organismsDiffer>
    <experiments>3</experiments>
</comment>
<comment type="interaction">
    <interactant intactId="EBI-1058674">
        <id>Q92764</id>
    </interactant>
    <interactant intactId="EBI-1567797">
        <id>Q8WWY3</id>
        <label>PRPF31</label>
    </interactant>
    <organismsDiffer>false</organismsDiffer>
    <experiments>3</experiments>
</comment>
<comment type="interaction">
    <interactant intactId="EBI-1058674">
        <id>Q92764</id>
    </interactant>
    <interactant intactId="EBI-11986293">
        <id>P0CG20</id>
        <label>PRR35</label>
    </interactant>
    <organismsDiffer>false</organismsDiffer>
    <experiments>3</experiments>
</comment>
<comment type="interaction">
    <interactant intactId="EBI-1058674">
        <id>Q92764</id>
    </interactant>
    <interactant intactId="EBI-11984663">
        <id>Q06455-2</id>
        <label>RUNX1T1</label>
    </interactant>
    <organismsDiffer>false</organismsDiffer>
    <experiments>3</experiments>
</comment>
<comment type="interaction">
    <interactant intactId="EBI-1058674">
        <id>Q92764</id>
    </interactant>
    <interactant intactId="EBI-748391">
        <id>Q9BWG6</id>
        <label>SCNM1</label>
    </interactant>
    <organismsDiffer>false</organismsDiffer>
    <experiments>3</experiments>
</comment>
<comment type="interaction">
    <interactant intactId="EBI-1058674">
        <id>Q92764</id>
    </interactant>
    <interactant intactId="EBI-79084">
        <id>Q92529</id>
        <label>SHC3</label>
    </interactant>
    <organismsDiffer>false</organismsDiffer>
    <experiments>3</experiments>
</comment>
<comment type="interaction">
    <interactant intactId="EBI-1058674">
        <id>Q92764</id>
    </interactant>
    <interactant intactId="EBI-10265149">
        <id>Q8N370</id>
        <label>SLC43A2</label>
    </interactant>
    <organismsDiffer>false</organismsDiffer>
    <experiments>3</experiments>
</comment>
<comment type="interaction">
    <interactant intactId="EBI-1058674">
        <id>Q92764</id>
    </interactant>
    <interactant intactId="EBI-455078">
        <id>Q969G3</id>
        <label>SMARCE1</label>
    </interactant>
    <organismsDiffer>false</organismsDiffer>
    <experiments>3</experiments>
</comment>
<comment type="interaction">
    <interactant intactId="EBI-1058674">
        <id>Q92764</id>
    </interactant>
    <interactant intactId="EBI-8463848">
        <id>Q8NB12</id>
        <label>SMYD1</label>
    </interactant>
    <organismsDiffer>false</organismsDiffer>
    <experiments>3</experiments>
</comment>
<comment type="interaction">
    <interactant intactId="EBI-1058674">
        <id>Q92764</id>
    </interactant>
    <interactant intactId="EBI-12017416">
        <id>Q9BX59</id>
        <label>TAPBPL</label>
    </interactant>
    <organismsDiffer>false</organismsDiffer>
    <experiments>3</experiments>
</comment>
<comment type="interaction">
    <interactant intactId="EBI-1058674">
        <id>Q92764</id>
    </interactant>
    <interactant intactId="EBI-12018146">
        <id>Q8IYX1</id>
        <label>TBC1D21</label>
    </interactant>
    <organismsDiffer>false</organismsDiffer>
    <experiments>3</experiments>
</comment>
<comment type="interaction">
    <interactant intactId="EBI-1058674">
        <id>Q92764</id>
    </interactant>
    <interactant intactId="EBI-17455779">
        <id>Q9Y2I9-2</id>
        <label>TBC1D30</label>
    </interactant>
    <organismsDiffer>false</organismsDiffer>
    <experiments>3</experiments>
</comment>
<comment type="interaction">
    <interactant intactId="EBI-1058674">
        <id>Q92764</id>
    </interactant>
    <interactant intactId="EBI-3258000">
        <id>Q9P0N9</id>
        <label>TBC1D7</label>
    </interactant>
    <organismsDiffer>false</organismsDiffer>
    <experiments>3</experiments>
</comment>
<comment type="interaction">
    <interactant intactId="EBI-1058674">
        <id>Q92764</id>
    </interactant>
    <interactant intactId="EBI-11955057">
        <id>Q8N8B7-2</id>
        <label>TCEANC</label>
    </interactant>
    <organismsDiffer>false</organismsDiffer>
    <experiments>3</experiments>
</comment>
<comment type="interaction">
    <interactant intactId="EBI-1058674">
        <id>Q92764</id>
    </interactant>
    <interactant intactId="EBI-740781">
        <id>Q9BT92</id>
        <label>TCHP</label>
    </interactant>
    <organismsDiffer>false</organismsDiffer>
    <experiments>3</experiments>
</comment>
<comment type="interaction">
    <interactant intactId="EBI-1058674">
        <id>Q92764</id>
    </interactant>
    <interactant intactId="EBI-750487">
        <id>Q8WW24</id>
        <label>TEKT4</label>
    </interactant>
    <organismsDiffer>false</organismsDiffer>
    <experiments>3</experiments>
</comment>
<comment type="interaction">
    <interactant intactId="EBI-1058674">
        <id>Q92764</id>
    </interactant>
    <interactant intactId="EBI-11139477">
        <id>Q96N21</id>
        <label>TEPSIN</label>
    </interactant>
    <organismsDiffer>false</organismsDiffer>
    <experiments>3</experiments>
</comment>
<comment type="interaction">
    <interactant intactId="EBI-1058674">
        <id>Q92764</id>
    </interactant>
    <interactant intactId="EBI-11741437">
        <id>Q08117-2</id>
        <label>TLE5</label>
    </interactant>
    <organismsDiffer>false</organismsDiffer>
    <experiments>3</experiments>
</comment>
<comment type="interaction">
    <interactant intactId="EBI-1058674">
        <id>Q92764</id>
    </interactant>
    <interactant intactId="EBI-702370">
        <id>Q14134</id>
        <label>TRIM29</label>
    </interactant>
    <organismsDiffer>false</organismsDiffer>
    <experiments>3</experiments>
</comment>
<comment type="interaction">
    <interactant intactId="EBI-1058674">
        <id>Q92764</id>
    </interactant>
    <interactant intactId="EBI-346882">
        <id>Q99816</id>
        <label>TSG101</label>
    </interactant>
    <organismsDiffer>false</organismsDiffer>
    <experiments>3</experiments>
</comment>
<comment type="interaction">
    <interactant intactId="EBI-1058674">
        <id>Q92764</id>
    </interactant>
    <interactant intactId="EBI-359793">
        <id>P40222</id>
        <label>TXLNA</label>
    </interactant>
    <organismsDiffer>false</organismsDiffer>
    <experiments>3</experiments>
</comment>
<comment type="interaction">
    <interactant intactId="EBI-1058674">
        <id>Q92764</id>
    </interactant>
    <interactant intactId="EBI-6116822">
        <id>Q8N3L3</id>
        <label>TXLNB</label>
    </interactant>
    <organismsDiffer>false</organismsDiffer>
    <experiments>3</experiments>
</comment>
<comment type="interaction">
    <interactant intactId="EBI-1058674">
        <id>Q92764</id>
    </interactant>
    <interactant intactId="EBI-7353612">
        <id>P57075-2</id>
        <label>UBASH3A</label>
    </interactant>
    <organismsDiffer>false</organismsDiffer>
    <experiments>3</experiments>
</comment>
<comment type="interaction">
    <interactant intactId="EBI-1058674">
        <id>Q92764</id>
    </interactant>
    <interactant intactId="EBI-743272">
        <id>O75604</id>
        <label>USP2</label>
    </interactant>
    <organismsDiffer>false</organismsDiffer>
    <experiments>3</experiments>
</comment>
<comment type="interaction">
    <interactant intactId="EBI-1058674">
        <id>Q92764</id>
    </interactant>
    <interactant intactId="EBI-9031083">
        <id>Q9Y2B5</id>
        <label>VPS9D1</label>
    </interactant>
    <organismsDiffer>false</organismsDiffer>
    <experiments>3</experiments>
</comment>
<comment type="interaction">
    <interactant intactId="EBI-1058674">
        <id>Q92764</id>
    </interactant>
    <interactant intactId="EBI-740727">
        <id>Q8TAU3</id>
        <label>ZNF417</label>
    </interactant>
    <organismsDiffer>false</organismsDiffer>
    <experiments>3</experiments>
</comment>
<comment type="interaction">
    <interactant intactId="EBI-1058674">
        <id>Q92764</id>
    </interactant>
    <interactant intactId="EBI-740232">
        <id>Q9NWS9-2</id>
        <label>ZNF446</label>
    </interactant>
    <organismsDiffer>false</organismsDiffer>
    <experiments>3</experiments>
</comment>
<comment type="tissue specificity">
    <text evidence="2">Early expression in the hair follicle, mainly found in supramatricial cells and lowermost cortical cells of the hair bulb.</text>
</comment>
<comment type="miscellaneous">
    <text>There are two types of hair/microfibrillar keratin, I (acidic) and II (neutral to basic).</text>
</comment>
<comment type="similarity">
    <text evidence="1">Belongs to the intermediate filament family.</text>
</comment>
<comment type="sequence caution" evidence="3">
    <conflict type="erroneous initiation">
        <sequence resource="EMBL-CDS" id="CAA62286"/>
    </conflict>
    <text>Truncated N-terminus.</text>
</comment>
<comment type="sequence caution" evidence="3">
    <conflict type="erroneous initiation">
        <sequence resource="EMBL-CDS" id="CAA76387"/>
    </conflict>
    <text>Truncated N-terminus.</text>
</comment>